<comment type="function">
    <text evidence="1">This protein binds specifically to 23S rRNA.</text>
</comment>
<comment type="function">
    <text evidence="1">The globular domain of the protein is located near the polypeptide exit tunnel on the outside of the subunit, while an extended beta-hairpin is found that lines the wall of the exit tunnel in the center of the 70S ribosome.</text>
</comment>
<comment type="subunit">
    <text evidence="1">Part of the 50S ribosomal subunit.</text>
</comment>
<comment type="subcellular location">
    <subcellularLocation>
        <location>Plastid</location>
        <location>Chloroplast</location>
    </subcellularLocation>
</comment>
<comment type="similarity">
    <text evidence="2">Belongs to the universal ribosomal protein uL22 family.</text>
</comment>
<geneLocation type="chloroplast"/>
<gene>
    <name type="primary">rpl22</name>
</gene>
<reference key="1">
    <citation type="journal article" date="1995" name="Plant Mol. Biol. Rep.">
        <title>Complete nucleotide sequence of the Porphyra purpurea chloroplast genome.</title>
        <authorList>
            <person name="Reith M.E."/>
            <person name="Munholland J."/>
        </authorList>
    </citation>
    <scope>NUCLEOTIDE SEQUENCE [LARGE SCALE GENOMIC DNA]</scope>
    <source>
        <strain>Avonport</strain>
    </source>
</reference>
<sequence>MNITKNLKETKAVGKYIRLSPHKVRRVLDQIRGRKYQEALIILEFMPYRACYHIKQILESAGANAEHNNGLNKNQLFITKAFADKGPTLKRFQPRAQGRAFPIHKPTCHITLGVSE</sequence>
<name>RK22_PORPU</name>
<accession>P51309</accession>
<protein>
    <recommendedName>
        <fullName evidence="2">Large ribosomal subunit protein uL22c</fullName>
    </recommendedName>
    <alternativeName>
        <fullName>50S ribosomal protein L22, chloroplastic</fullName>
    </alternativeName>
</protein>
<organism>
    <name type="scientific">Porphyra purpurea</name>
    <name type="common">Red seaweed</name>
    <name type="synonym">Ulva purpurea</name>
    <dbReference type="NCBI Taxonomy" id="2787"/>
    <lineage>
        <taxon>Eukaryota</taxon>
        <taxon>Rhodophyta</taxon>
        <taxon>Bangiophyceae</taxon>
        <taxon>Bangiales</taxon>
        <taxon>Bangiaceae</taxon>
        <taxon>Porphyra</taxon>
    </lineage>
</organism>
<proteinExistence type="inferred from homology"/>
<evidence type="ECO:0000250" key="1"/>
<evidence type="ECO:0000305" key="2"/>
<keyword id="KW-0150">Chloroplast</keyword>
<keyword id="KW-0934">Plastid</keyword>
<keyword id="KW-0687">Ribonucleoprotein</keyword>
<keyword id="KW-0689">Ribosomal protein</keyword>
<keyword id="KW-0694">RNA-binding</keyword>
<keyword id="KW-0699">rRNA-binding</keyword>
<feature type="chain" id="PRO_0000125323" description="Large ribosomal subunit protein uL22c">
    <location>
        <begin position="1"/>
        <end position="116"/>
    </location>
</feature>
<dbReference type="EMBL" id="U38804">
    <property type="protein sequence ID" value="AAC08195.1"/>
    <property type="molecule type" value="Genomic_DNA"/>
</dbReference>
<dbReference type="PIR" id="S73230">
    <property type="entry name" value="S73230"/>
</dbReference>
<dbReference type="RefSeq" id="NP_053919.1">
    <property type="nucleotide sequence ID" value="NC_000925.1"/>
</dbReference>
<dbReference type="SMR" id="P51309"/>
<dbReference type="GeneID" id="809938"/>
<dbReference type="GO" id="GO:0009507">
    <property type="term" value="C:chloroplast"/>
    <property type="evidence" value="ECO:0007669"/>
    <property type="project" value="UniProtKB-SubCell"/>
</dbReference>
<dbReference type="GO" id="GO:0015934">
    <property type="term" value="C:large ribosomal subunit"/>
    <property type="evidence" value="ECO:0007669"/>
    <property type="project" value="InterPro"/>
</dbReference>
<dbReference type="GO" id="GO:0019843">
    <property type="term" value="F:rRNA binding"/>
    <property type="evidence" value="ECO:0007669"/>
    <property type="project" value="UniProtKB-UniRule"/>
</dbReference>
<dbReference type="GO" id="GO:0003735">
    <property type="term" value="F:structural constituent of ribosome"/>
    <property type="evidence" value="ECO:0007669"/>
    <property type="project" value="InterPro"/>
</dbReference>
<dbReference type="GO" id="GO:0006412">
    <property type="term" value="P:translation"/>
    <property type="evidence" value="ECO:0007669"/>
    <property type="project" value="UniProtKB-UniRule"/>
</dbReference>
<dbReference type="CDD" id="cd00336">
    <property type="entry name" value="Ribosomal_L22"/>
    <property type="match status" value="1"/>
</dbReference>
<dbReference type="FunFam" id="3.90.470.10:FF:000004">
    <property type="entry name" value="50S ribosomal protein L22, chloroplastic"/>
    <property type="match status" value="1"/>
</dbReference>
<dbReference type="Gene3D" id="3.90.470.10">
    <property type="entry name" value="Ribosomal protein L22/L17"/>
    <property type="match status" value="1"/>
</dbReference>
<dbReference type="HAMAP" id="MF_01331_B">
    <property type="entry name" value="Ribosomal_uL22_B"/>
    <property type="match status" value="1"/>
</dbReference>
<dbReference type="InterPro" id="IPR001063">
    <property type="entry name" value="Ribosomal_uL22"/>
</dbReference>
<dbReference type="InterPro" id="IPR005727">
    <property type="entry name" value="Ribosomal_uL22_bac/chlpt-type"/>
</dbReference>
<dbReference type="InterPro" id="IPR047867">
    <property type="entry name" value="Ribosomal_uL22_bac/org-type"/>
</dbReference>
<dbReference type="InterPro" id="IPR018260">
    <property type="entry name" value="Ribosomal_uL22_CS"/>
</dbReference>
<dbReference type="InterPro" id="IPR036394">
    <property type="entry name" value="Ribosomal_uL22_sf"/>
</dbReference>
<dbReference type="NCBIfam" id="TIGR01044">
    <property type="entry name" value="rplV_bact"/>
    <property type="match status" value="1"/>
</dbReference>
<dbReference type="PANTHER" id="PTHR13501">
    <property type="entry name" value="CHLOROPLAST 50S RIBOSOMAL PROTEIN L22-RELATED"/>
    <property type="match status" value="1"/>
</dbReference>
<dbReference type="PANTHER" id="PTHR13501:SF8">
    <property type="entry name" value="LARGE RIBOSOMAL SUBUNIT PROTEIN UL22M"/>
    <property type="match status" value="1"/>
</dbReference>
<dbReference type="Pfam" id="PF00237">
    <property type="entry name" value="Ribosomal_L22"/>
    <property type="match status" value="1"/>
</dbReference>
<dbReference type="SUPFAM" id="SSF54843">
    <property type="entry name" value="Ribosomal protein L22"/>
    <property type="match status" value="1"/>
</dbReference>
<dbReference type="PROSITE" id="PS00464">
    <property type="entry name" value="RIBOSOMAL_L22"/>
    <property type="match status" value="1"/>
</dbReference>